<feature type="chain" id="PRO_1000067609" description="Large ribosomal subunit protein uL22">
    <location>
        <begin position="1"/>
        <end position="110"/>
    </location>
</feature>
<keyword id="KW-0687">Ribonucleoprotein</keyword>
<keyword id="KW-0689">Ribosomal protein</keyword>
<keyword id="KW-0694">RNA-binding</keyword>
<keyword id="KW-0699">rRNA-binding</keyword>
<accession>A8A5C0</accession>
<reference key="1">
    <citation type="journal article" date="2008" name="J. Bacteriol.">
        <title>The pangenome structure of Escherichia coli: comparative genomic analysis of E. coli commensal and pathogenic isolates.</title>
        <authorList>
            <person name="Rasko D.A."/>
            <person name="Rosovitz M.J."/>
            <person name="Myers G.S.A."/>
            <person name="Mongodin E.F."/>
            <person name="Fricke W.F."/>
            <person name="Gajer P."/>
            <person name="Crabtree J."/>
            <person name="Sebaihia M."/>
            <person name="Thomson N.R."/>
            <person name="Chaudhuri R."/>
            <person name="Henderson I.R."/>
            <person name="Sperandio V."/>
            <person name="Ravel J."/>
        </authorList>
    </citation>
    <scope>NUCLEOTIDE SEQUENCE [LARGE SCALE GENOMIC DNA]</scope>
    <source>
        <strain>HS</strain>
    </source>
</reference>
<proteinExistence type="inferred from homology"/>
<organism>
    <name type="scientific">Escherichia coli O9:H4 (strain HS)</name>
    <dbReference type="NCBI Taxonomy" id="331112"/>
    <lineage>
        <taxon>Bacteria</taxon>
        <taxon>Pseudomonadati</taxon>
        <taxon>Pseudomonadota</taxon>
        <taxon>Gammaproteobacteria</taxon>
        <taxon>Enterobacterales</taxon>
        <taxon>Enterobacteriaceae</taxon>
        <taxon>Escherichia</taxon>
    </lineage>
</organism>
<protein>
    <recommendedName>
        <fullName evidence="1">Large ribosomal subunit protein uL22</fullName>
    </recommendedName>
    <alternativeName>
        <fullName evidence="2">50S ribosomal protein L22</fullName>
    </alternativeName>
</protein>
<name>RL22_ECOHS</name>
<sequence length="110" mass="12226">METIAKHRHARSSAQKVRLVADLIRGKKVSQALDILTYTNKKAAVLVKKVLESAIANAEHNDGADIDDLKVTKIFVDEGPSMKRIMPRAKGRADRILKRTSHITVVVSDR</sequence>
<comment type="function">
    <text evidence="1">This protein binds specifically to 23S rRNA; its binding is stimulated by other ribosomal proteins, e.g. L4, L17, and L20. It is important during the early stages of 50S assembly. It makes multiple contacts with different domains of the 23S rRNA in the assembled 50S subunit and ribosome (By similarity).</text>
</comment>
<comment type="function">
    <text evidence="1">The globular domain of the protein is located near the polypeptide exit tunnel on the outside of the subunit, while an extended beta-hairpin is found that lines the wall of the exit tunnel in the center of the 70S ribosome.</text>
</comment>
<comment type="subunit">
    <text evidence="1">Part of the 50S ribosomal subunit.</text>
</comment>
<comment type="similarity">
    <text evidence="1">Belongs to the universal ribosomal protein uL22 family.</text>
</comment>
<evidence type="ECO:0000255" key="1">
    <source>
        <dbReference type="HAMAP-Rule" id="MF_01331"/>
    </source>
</evidence>
<evidence type="ECO:0000305" key="2"/>
<gene>
    <name evidence="1" type="primary">rplV</name>
    <name type="ordered locus">EcHS_A3509</name>
</gene>
<dbReference type="EMBL" id="CP000802">
    <property type="protein sequence ID" value="ABV07724.1"/>
    <property type="molecule type" value="Genomic_DNA"/>
</dbReference>
<dbReference type="RefSeq" id="WP_000447529.1">
    <property type="nucleotide sequence ID" value="NC_009800.1"/>
</dbReference>
<dbReference type="SMR" id="A8A5C0"/>
<dbReference type="GeneID" id="93778672"/>
<dbReference type="KEGG" id="ecx:EcHS_A3509"/>
<dbReference type="HOGENOM" id="CLU_083987_3_3_6"/>
<dbReference type="GO" id="GO:0022625">
    <property type="term" value="C:cytosolic large ribosomal subunit"/>
    <property type="evidence" value="ECO:0007669"/>
    <property type="project" value="TreeGrafter"/>
</dbReference>
<dbReference type="GO" id="GO:0019843">
    <property type="term" value="F:rRNA binding"/>
    <property type="evidence" value="ECO:0007669"/>
    <property type="project" value="UniProtKB-UniRule"/>
</dbReference>
<dbReference type="GO" id="GO:0003735">
    <property type="term" value="F:structural constituent of ribosome"/>
    <property type="evidence" value="ECO:0007669"/>
    <property type="project" value="InterPro"/>
</dbReference>
<dbReference type="GO" id="GO:0006412">
    <property type="term" value="P:translation"/>
    <property type="evidence" value="ECO:0007669"/>
    <property type="project" value="UniProtKB-UniRule"/>
</dbReference>
<dbReference type="CDD" id="cd00336">
    <property type="entry name" value="Ribosomal_L22"/>
    <property type="match status" value="1"/>
</dbReference>
<dbReference type="FunFam" id="3.90.470.10:FF:000001">
    <property type="entry name" value="50S ribosomal protein L22"/>
    <property type="match status" value="1"/>
</dbReference>
<dbReference type="Gene3D" id="3.90.470.10">
    <property type="entry name" value="Ribosomal protein L22/L17"/>
    <property type="match status" value="1"/>
</dbReference>
<dbReference type="HAMAP" id="MF_01331_B">
    <property type="entry name" value="Ribosomal_uL22_B"/>
    <property type="match status" value="1"/>
</dbReference>
<dbReference type="InterPro" id="IPR001063">
    <property type="entry name" value="Ribosomal_uL22"/>
</dbReference>
<dbReference type="InterPro" id="IPR005727">
    <property type="entry name" value="Ribosomal_uL22_bac/chlpt-type"/>
</dbReference>
<dbReference type="InterPro" id="IPR047867">
    <property type="entry name" value="Ribosomal_uL22_bac/org-type"/>
</dbReference>
<dbReference type="InterPro" id="IPR018260">
    <property type="entry name" value="Ribosomal_uL22_CS"/>
</dbReference>
<dbReference type="InterPro" id="IPR036394">
    <property type="entry name" value="Ribosomal_uL22_sf"/>
</dbReference>
<dbReference type="NCBIfam" id="TIGR01044">
    <property type="entry name" value="rplV_bact"/>
    <property type="match status" value="1"/>
</dbReference>
<dbReference type="PANTHER" id="PTHR13501">
    <property type="entry name" value="CHLOROPLAST 50S RIBOSOMAL PROTEIN L22-RELATED"/>
    <property type="match status" value="1"/>
</dbReference>
<dbReference type="PANTHER" id="PTHR13501:SF8">
    <property type="entry name" value="LARGE RIBOSOMAL SUBUNIT PROTEIN UL22M"/>
    <property type="match status" value="1"/>
</dbReference>
<dbReference type="Pfam" id="PF00237">
    <property type="entry name" value="Ribosomal_L22"/>
    <property type="match status" value="1"/>
</dbReference>
<dbReference type="SUPFAM" id="SSF54843">
    <property type="entry name" value="Ribosomal protein L22"/>
    <property type="match status" value="1"/>
</dbReference>
<dbReference type="PROSITE" id="PS00464">
    <property type="entry name" value="RIBOSOMAL_L22"/>
    <property type="match status" value="1"/>
</dbReference>